<proteinExistence type="inferred from homology"/>
<gene>
    <name type="ordered locus">MRA_2986</name>
</gene>
<feature type="signal peptide" evidence="2">
    <location>
        <begin position="1"/>
        <end position="38"/>
    </location>
</feature>
<feature type="chain" id="PRO_0000305182" description="Rhamnosyl O-methyltransferase">
    <location>
        <begin position="39"/>
        <end position="245"/>
    </location>
</feature>
<keyword id="KW-0444">Lipid biosynthesis</keyword>
<keyword id="KW-0443">Lipid metabolism</keyword>
<keyword id="KW-0489">Methyltransferase</keyword>
<keyword id="KW-1185">Reference proteome</keyword>
<keyword id="KW-0732">Signal</keyword>
<keyword id="KW-0808">Transferase</keyword>
<organism>
    <name type="scientific">Mycobacterium tuberculosis (strain ATCC 25177 / H37Ra)</name>
    <dbReference type="NCBI Taxonomy" id="419947"/>
    <lineage>
        <taxon>Bacteria</taxon>
        <taxon>Bacillati</taxon>
        <taxon>Actinomycetota</taxon>
        <taxon>Actinomycetes</taxon>
        <taxon>Mycobacteriales</taxon>
        <taxon>Mycobacteriaceae</taxon>
        <taxon>Mycobacterium</taxon>
        <taxon>Mycobacterium tuberculosis complex</taxon>
    </lineage>
</organism>
<reference key="1">
    <citation type="journal article" date="2008" name="PLoS ONE">
        <title>Genetic basis of virulence attenuation revealed by comparative genomic analysis of Mycobacterium tuberculosis strain H37Ra versus H37Rv.</title>
        <authorList>
            <person name="Zheng H."/>
            <person name="Lu L."/>
            <person name="Wang B."/>
            <person name="Pu S."/>
            <person name="Zhang X."/>
            <person name="Zhu G."/>
            <person name="Shi W."/>
            <person name="Zhang L."/>
            <person name="Wang H."/>
            <person name="Wang S."/>
            <person name="Zhao G."/>
            <person name="Zhang Y."/>
        </authorList>
    </citation>
    <scope>NUCLEOTIDE SEQUENCE [LARGE SCALE GENOMIC DNA]</scope>
    <source>
        <strain>ATCC 25177 / H37Ra</strain>
    </source>
</reference>
<name>RNMT_MYCTA</name>
<dbReference type="EC" id="2.1.1.-"/>
<dbReference type="EMBL" id="CP000611">
    <property type="protein sequence ID" value="ABQ74767.1"/>
    <property type="molecule type" value="Genomic_DNA"/>
</dbReference>
<dbReference type="RefSeq" id="WP_003414919.1">
    <property type="nucleotide sequence ID" value="NZ_CP016972.1"/>
</dbReference>
<dbReference type="SMR" id="A5U6W7"/>
<dbReference type="KEGG" id="mra:MRA_2986"/>
<dbReference type="eggNOG" id="COG3510">
    <property type="taxonomic scope" value="Bacteria"/>
</dbReference>
<dbReference type="HOGENOM" id="CLU_063868_0_0_11"/>
<dbReference type="Proteomes" id="UP000001988">
    <property type="component" value="Chromosome"/>
</dbReference>
<dbReference type="GO" id="GO:0005886">
    <property type="term" value="C:plasma membrane"/>
    <property type="evidence" value="ECO:0007669"/>
    <property type="project" value="TreeGrafter"/>
</dbReference>
<dbReference type="GO" id="GO:0008168">
    <property type="term" value="F:methyltransferase activity"/>
    <property type="evidence" value="ECO:0007669"/>
    <property type="project" value="UniProtKB-KW"/>
</dbReference>
<dbReference type="GO" id="GO:0071770">
    <property type="term" value="P:DIM/DIP cell wall layer assembly"/>
    <property type="evidence" value="ECO:0007669"/>
    <property type="project" value="TreeGrafter"/>
</dbReference>
<dbReference type="GO" id="GO:0008610">
    <property type="term" value="P:lipid biosynthetic process"/>
    <property type="evidence" value="ECO:0007669"/>
    <property type="project" value="InterPro"/>
</dbReference>
<dbReference type="GO" id="GO:0032259">
    <property type="term" value="P:methylation"/>
    <property type="evidence" value="ECO:0007669"/>
    <property type="project" value="UniProtKB-KW"/>
</dbReference>
<dbReference type="Gene3D" id="3.40.50.150">
    <property type="entry name" value="Vaccinia Virus protein VP39"/>
    <property type="match status" value="1"/>
</dbReference>
<dbReference type="InterPro" id="IPR054932">
    <property type="entry name" value="RhmsylMtase"/>
</dbReference>
<dbReference type="InterPro" id="IPR007072">
    <property type="entry name" value="RNMT_CmcI"/>
</dbReference>
<dbReference type="InterPro" id="IPR029063">
    <property type="entry name" value="SAM-dependent_MTases_sf"/>
</dbReference>
<dbReference type="NCBIfam" id="NF045824">
    <property type="entry name" value="RhmsylMtase"/>
    <property type="match status" value="1"/>
</dbReference>
<dbReference type="PANTHER" id="PTHR40048">
    <property type="entry name" value="RHAMNOSYL O-METHYLTRANSFERASE"/>
    <property type="match status" value="1"/>
</dbReference>
<dbReference type="PANTHER" id="PTHR40048:SF1">
    <property type="entry name" value="RHAMNOSYL O-METHYLTRANSFERASE"/>
    <property type="match status" value="1"/>
</dbReference>
<dbReference type="Pfam" id="PF04989">
    <property type="entry name" value="RMNT_CmcI"/>
    <property type="match status" value="1"/>
</dbReference>
<dbReference type="SUPFAM" id="SSF53335">
    <property type="entry name" value="S-adenosyl-L-methionine-dependent methyltransferases"/>
    <property type="match status" value="1"/>
</dbReference>
<evidence type="ECO:0000250" key="1"/>
<evidence type="ECO:0000255" key="2"/>
<evidence type="ECO:0000305" key="3"/>
<comment type="function">
    <text evidence="1">Catalyzes the O-methylation of the hydroxyl group located on C-2 of the first rhamnosyl residue linked to the phenolic group of glycosylated phenolphthiocerol dimycocerosates (PGL) and p-hydroxybenzoic acid derivatives (p-HBAD).</text>
</comment>
<comment type="similarity">
    <text evidence="3">Belongs to the rhamnosyl O-methyltransferase family.</text>
</comment>
<sequence>MGLVWRSRTSLVGQLIGLVRLVASFAAQLFYRPSDAVAEEYHKWYYGNLVWTKTTYMGINCWKSVSDMWNYQEILSELQPSLVIEFGTRYGGSAVYFANIMRQIGQPFKVLTVDNSHKALDPRARREPDVLFVESSSTDPAIAEQIQRLKNEYPGKIFAILDSDHSMNHVLAEMKLLRPLLSAGDYLVVEDSNINGHPVLPGFGPGPYEAIEAYEDEFPNDYKHDAERENKFGWTSAPNGFLIRN</sequence>
<accession>A5U6W7</accession>
<protein>
    <recommendedName>
        <fullName>Rhamnosyl O-methyltransferase</fullName>
        <ecNumber>2.1.1.-</ecNumber>
    </recommendedName>
</protein>